<gene>
    <name type="primary">NDUFS8</name>
    <name type="ORF">QorA-12386</name>
</gene>
<comment type="function">
    <text evidence="1">Core subunit of the mitochondrial membrane respiratory chain NADH dehydrogenase (Complex I) which catalyzes electron transfer from NADH through the respiratory chain, using ubiquinone as an electron acceptor (By similarity). Essential for the catalytic activity and assembly of complex I (By similarity).</text>
</comment>
<comment type="catalytic activity">
    <reaction evidence="1">
        <text>a ubiquinone + NADH + 5 H(+)(in) = a ubiquinol + NAD(+) + 4 H(+)(out)</text>
        <dbReference type="Rhea" id="RHEA:29091"/>
        <dbReference type="Rhea" id="RHEA-COMP:9565"/>
        <dbReference type="Rhea" id="RHEA-COMP:9566"/>
        <dbReference type="ChEBI" id="CHEBI:15378"/>
        <dbReference type="ChEBI" id="CHEBI:16389"/>
        <dbReference type="ChEBI" id="CHEBI:17976"/>
        <dbReference type="ChEBI" id="CHEBI:57540"/>
        <dbReference type="ChEBI" id="CHEBI:57945"/>
        <dbReference type="EC" id="7.1.1.2"/>
    </reaction>
</comment>
<comment type="cofactor">
    <cofactor evidence="3">
        <name>[4Fe-4S] cluster</name>
        <dbReference type="ChEBI" id="CHEBI:49883"/>
    </cofactor>
    <text evidence="3">Binds 2 [4Fe-4S] cluster.</text>
</comment>
<comment type="subunit">
    <text evidence="1 2">Core subunit of respiratory chain NADH dehydrogenase (Complex I) which is composed of 45 different subunits (By similarity). This is a component of the iron-sulfur (IP) fragment of the enzyme (By similarity). Interacts with RAB5IF (By similarity).</text>
</comment>
<comment type="subcellular location">
    <subcellularLocation>
        <location evidence="2">Mitochondrion inner membrane</location>
        <topology evidence="2">Peripheral membrane protein</topology>
        <orientation evidence="2">Matrix side</orientation>
    </subcellularLocation>
</comment>
<comment type="similarity">
    <text evidence="6">Belongs to the complex I 23 kDa subunit family.</text>
</comment>
<organism>
    <name type="scientific">Macaca fascicularis</name>
    <name type="common">Crab-eating macaque</name>
    <name type="synonym">Cynomolgus monkey</name>
    <dbReference type="NCBI Taxonomy" id="9541"/>
    <lineage>
        <taxon>Eukaryota</taxon>
        <taxon>Metazoa</taxon>
        <taxon>Chordata</taxon>
        <taxon>Craniata</taxon>
        <taxon>Vertebrata</taxon>
        <taxon>Euteleostomi</taxon>
        <taxon>Mammalia</taxon>
        <taxon>Eutheria</taxon>
        <taxon>Euarchontoglires</taxon>
        <taxon>Primates</taxon>
        <taxon>Haplorrhini</taxon>
        <taxon>Catarrhini</taxon>
        <taxon>Cercopithecidae</taxon>
        <taxon>Cercopithecinae</taxon>
        <taxon>Macaca</taxon>
    </lineage>
</organism>
<reference key="1">
    <citation type="submission" date="2003-10" db="EMBL/GenBank/DDBJ databases">
        <title>Isolation and characterization of cDNA for macaque neurological disease genes.</title>
        <authorList>
            <person name="Kusuda J."/>
            <person name="Osada N."/>
            <person name="Tanuma R."/>
            <person name="Hirata M."/>
            <person name="Sugano S."/>
            <person name="Hashimoto K."/>
        </authorList>
    </citation>
    <scope>NUCLEOTIDE SEQUENCE [LARGE SCALE MRNA]</scope>
    <source>
        <tissue>Occipital cortex</tissue>
    </source>
</reference>
<name>NDUS8_MACFA</name>
<feature type="transit peptide" description="Mitochondrion" evidence="4">
    <location>
        <begin position="1"/>
        <end position="34"/>
    </location>
</feature>
<feature type="chain" id="PRO_0000020013" description="NADH dehydrogenase [ubiquinone] iron-sulfur protein 8, mitochondrial">
    <location>
        <begin position="35"/>
        <end position="210"/>
    </location>
</feature>
<feature type="domain" description="4Fe-4S ferredoxin-type 1" evidence="5">
    <location>
        <begin position="102"/>
        <end position="131"/>
    </location>
</feature>
<feature type="domain" description="4Fe-4S ferredoxin-type 2" evidence="5">
    <location>
        <begin position="141"/>
        <end position="170"/>
    </location>
</feature>
<feature type="binding site" evidence="5">
    <location>
        <position position="111"/>
    </location>
    <ligand>
        <name>[4Fe-4S] cluster</name>
        <dbReference type="ChEBI" id="CHEBI:49883"/>
        <label>1</label>
    </ligand>
</feature>
<feature type="binding site" evidence="5">
    <location>
        <position position="114"/>
    </location>
    <ligand>
        <name>[4Fe-4S] cluster</name>
        <dbReference type="ChEBI" id="CHEBI:49883"/>
        <label>1</label>
    </ligand>
</feature>
<feature type="binding site" evidence="5">
    <location>
        <position position="117"/>
    </location>
    <ligand>
        <name>[4Fe-4S] cluster</name>
        <dbReference type="ChEBI" id="CHEBI:49883"/>
        <label>1</label>
    </ligand>
</feature>
<feature type="binding site" evidence="5">
    <location>
        <position position="121"/>
    </location>
    <ligand>
        <name>[4Fe-4S] cluster</name>
        <dbReference type="ChEBI" id="CHEBI:49883"/>
        <label>2</label>
    </ligand>
</feature>
<feature type="binding site" evidence="5">
    <location>
        <position position="150"/>
    </location>
    <ligand>
        <name>[4Fe-4S] cluster</name>
        <dbReference type="ChEBI" id="CHEBI:49883"/>
        <label>2</label>
    </ligand>
</feature>
<feature type="binding site" evidence="5">
    <location>
        <position position="153"/>
    </location>
    <ligand>
        <name>[4Fe-4S] cluster</name>
        <dbReference type="ChEBI" id="CHEBI:49883"/>
        <label>2</label>
    </ligand>
</feature>
<feature type="binding site" evidence="5">
    <location>
        <position position="156"/>
    </location>
    <ligand>
        <name>[4Fe-4S] cluster</name>
        <dbReference type="ChEBI" id="CHEBI:49883"/>
        <label>2</label>
    </ligand>
</feature>
<feature type="binding site" evidence="5">
    <location>
        <position position="160"/>
    </location>
    <ligand>
        <name>[4Fe-4S] cluster</name>
        <dbReference type="ChEBI" id="CHEBI:49883"/>
        <label>1</label>
    </ligand>
</feature>
<protein>
    <recommendedName>
        <fullName>NADH dehydrogenase [ubiquinone] iron-sulfur protein 8, mitochondrial</fullName>
        <ecNumber evidence="1">7.1.1.2</ecNumber>
    </recommendedName>
    <alternativeName>
        <fullName>Complex I-23kD</fullName>
        <shortName>CI-23kD</shortName>
    </alternativeName>
    <alternativeName>
        <fullName>NADH-ubiquinone oxidoreductase 23 kDa subunit</fullName>
    </alternativeName>
</protein>
<evidence type="ECO:0000250" key="1">
    <source>
        <dbReference type="UniProtKB" id="O00217"/>
    </source>
</evidence>
<evidence type="ECO:0000250" key="2">
    <source>
        <dbReference type="UniProtKB" id="P42028"/>
    </source>
</evidence>
<evidence type="ECO:0000250" key="3">
    <source>
        <dbReference type="UniProtKB" id="Q56224"/>
    </source>
</evidence>
<evidence type="ECO:0000255" key="4"/>
<evidence type="ECO:0000255" key="5">
    <source>
        <dbReference type="PROSITE-ProRule" id="PRU00711"/>
    </source>
</evidence>
<evidence type="ECO:0000305" key="6"/>
<accession>Q60HE3</accession>
<sequence>MRCLTMPTLLRALAQAAHTGPPGGRTLHSSAVAATYKYVNMQESKTDMKSVTDRAARTLLWTELFRGLGMTLSYLFREPATINYPFEKGPLSPRFRGEHALRRYPSGEERCIACKLCEAVCPAQAITIEAEPRADGSRRTTRYDIDMTKCIYCGFCQEACPVDAIVEGPNFEFSTETHEELLYNKEKLLNNGDKWEAEIAANIQADYLYR</sequence>
<proteinExistence type="evidence at transcript level"/>
<dbReference type="EC" id="7.1.1.2" evidence="1"/>
<dbReference type="EMBL" id="AB125184">
    <property type="protein sequence ID" value="BAD51972.1"/>
    <property type="molecule type" value="mRNA"/>
</dbReference>
<dbReference type="RefSeq" id="XP_005577086.2">
    <property type="nucleotide sequence ID" value="XM_005577029.4"/>
</dbReference>
<dbReference type="SMR" id="Q60HE3"/>
<dbReference type="STRING" id="9541.ENSMFAP00000007811"/>
<dbReference type="GeneID" id="101866792"/>
<dbReference type="KEGG" id="mcf:101866792"/>
<dbReference type="CTD" id="4728"/>
<dbReference type="eggNOG" id="KOG3256">
    <property type="taxonomic scope" value="Eukaryota"/>
</dbReference>
<dbReference type="Proteomes" id="UP000233100">
    <property type="component" value="Unplaced"/>
</dbReference>
<dbReference type="GO" id="GO:0005743">
    <property type="term" value="C:mitochondrial inner membrane"/>
    <property type="evidence" value="ECO:0000250"/>
    <property type="project" value="UniProtKB"/>
</dbReference>
<dbReference type="GO" id="GO:0005739">
    <property type="term" value="C:mitochondrion"/>
    <property type="evidence" value="ECO:0000250"/>
    <property type="project" value="UniProtKB"/>
</dbReference>
<dbReference type="GO" id="GO:0045271">
    <property type="term" value="C:respiratory chain complex I"/>
    <property type="evidence" value="ECO:0000250"/>
    <property type="project" value="UniProtKB"/>
</dbReference>
<dbReference type="GO" id="GO:0051539">
    <property type="term" value="F:4 iron, 4 sulfur cluster binding"/>
    <property type="evidence" value="ECO:0007669"/>
    <property type="project" value="UniProtKB-KW"/>
</dbReference>
<dbReference type="GO" id="GO:0046872">
    <property type="term" value="F:metal ion binding"/>
    <property type="evidence" value="ECO:0007669"/>
    <property type="project" value="UniProtKB-KW"/>
</dbReference>
<dbReference type="GO" id="GO:0008137">
    <property type="term" value="F:NADH dehydrogenase (ubiquinone) activity"/>
    <property type="evidence" value="ECO:0000250"/>
    <property type="project" value="UniProtKB"/>
</dbReference>
<dbReference type="GO" id="GO:0006120">
    <property type="term" value="P:mitochondrial electron transport, NADH to ubiquinone"/>
    <property type="evidence" value="ECO:0000250"/>
    <property type="project" value="UniProtKB"/>
</dbReference>
<dbReference type="GO" id="GO:0032981">
    <property type="term" value="P:mitochondrial respiratory chain complex I assembly"/>
    <property type="evidence" value="ECO:0000250"/>
    <property type="project" value="UniProtKB"/>
</dbReference>
<dbReference type="FunFam" id="3.30.70.3270:FF:000001">
    <property type="entry name" value="NADH-quinone oxidoreductase subunit I 1"/>
    <property type="match status" value="1"/>
</dbReference>
<dbReference type="Gene3D" id="3.30.70.3270">
    <property type="match status" value="1"/>
</dbReference>
<dbReference type="HAMAP" id="MF_01351">
    <property type="entry name" value="NDH1_NuoI"/>
    <property type="match status" value="1"/>
</dbReference>
<dbReference type="InterPro" id="IPR017896">
    <property type="entry name" value="4Fe4S_Fe-S-bd"/>
</dbReference>
<dbReference type="InterPro" id="IPR017900">
    <property type="entry name" value="4Fe4S_Fe_S_CS"/>
</dbReference>
<dbReference type="InterPro" id="IPR010226">
    <property type="entry name" value="NADH_quinone_OxRdtase_chainI"/>
</dbReference>
<dbReference type="NCBIfam" id="TIGR01971">
    <property type="entry name" value="NuoI"/>
    <property type="match status" value="1"/>
</dbReference>
<dbReference type="NCBIfam" id="NF004538">
    <property type="entry name" value="PRK05888.1-4"/>
    <property type="match status" value="1"/>
</dbReference>
<dbReference type="NCBIfam" id="NF004539">
    <property type="entry name" value="PRK05888.1-5"/>
    <property type="match status" value="1"/>
</dbReference>
<dbReference type="PANTHER" id="PTHR10849:SF20">
    <property type="entry name" value="NADH DEHYDROGENASE [UBIQUINONE] IRON-SULFUR PROTEIN 8, MITOCHONDRIAL"/>
    <property type="match status" value="1"/>
</dbReference>
<dbReference type="PANTHER" id="PTHR10849">
    <property type="entry name" value="NADH DEHYDROGENASE UBIQUINONE IRON-SULFUR PROTEIN 8, MITOCHONDRIAL"/>
    <property type="match status" value="1"/>
</dbReference>
<dbReference type="Pfam" id="PF12838">
    <property type="entry name" value="Fer4_7"/>
    <property type="match status" value="1"/>
</dbReference>
<dbReference type="SUPFAM" id="SSF54862">
    <property type="entry name" value="4Fe-4S ferredoxins"/>
    <property type="match status" value="1"/>
</dbReference>
<dbReference type="PROSITE" id="PS00198">
    <property type="entry name" value="4FE4S_FER_1"/>
    <property type="match status" value="2"/>
</dbReference>
<dbReference type="PROSITE" id="PS51379">
    <property type="entry name" value="4FE4S_FER_2"/>
    <property type="match status" value="2"/>
</dbReference>
<keyword id="KW-0004">4Fe-4S</keyword>
<keyword id="KW-0249">Electron transport</keyword>
<keyword id="KW-0408">Iron</keyword>
<keyword id="KW-0411">Iron-sulfur</keyword>
<keyword id="KW-0472">Membrane</keyword>
<keyword id="KW-0479">Metal-binding</keyword>
<keyword id="KW-0496">Mitochondrion</keyword>
<keyword id="KW-0999">Mitochondrion inner membrane</keyword>
<keyword id="KW-0520">NAD</keyword>
<keyword id="KW-0560">Oxidoreductase</keyword>
<keyword id="KW-1185">Reference proteome</keyword>
<keyword id="KW-0677">Repeat</keyword>
<keyword id="KW-0679">Respiratory chain</keyword>
<keyword id="KW-0809">Transit peptide</keyword>
<keyword id="KW-1278">Translocase</keyword>
<keyword id="KW-0813">Transport</keyword>
<keyword id="KW-0830">Ubiquinone</keyword>